<protein>
    <recommendedName>
        <fullName>Putative peptidyl-prolyl cis-trans isomerase Cbf2</fullName>
        <shortName>PPIase Cbf2</shortName>
        <ecNumber>5.2.1.8</ecNumber>
    </recommendedName>
    <alternativeName>
        <fullName>Cell-binding factor 2</fullName>
    </alternativeName>
    <alternativeName>
        <fullName>Major antigen peb4A</fullName>
    </alternativeName>
    <alternativeName>
        <fullName>Rotamase Cbf2</fullName>
    </alternativeName>
</protein>
<feature type="signal peptide" evidence="1">
    <location>
        <begin position="1"/>
        <end position="21"/>
    </location>
</feature>
<feature type="chain" id="PRO_0000281896" description="Putative peptidyl-prolyl cis-trans isomerase Cbf2">
    <location>
        <begin position="22"/>
        <end position="273"/>
    </location>
</feature>
<feature type="domain" description="PpiC" evidence="2">
    <location>
        <begin position="131"/>
        <end position="228"/>
    </location>
</feature>
<feature type="sequence conflict" description="In Ref. 1; CAA59175." evidence="3" ref="1">
    <original>A</original>
    <variation>T</variation>
    <location>
        <position position="10"/>
    </location>
</feature>
<feature type="sequence conflict" description="In Ref. 1; CAA59175." evidence="3" ref="1">
    <original>A</original>
    <variation>V</variation>
    <location>
        <position position="16"/>
    </location>
</feature>
<feature type="sequence conflict" description="In Ref. 1; CAA59175." evidence="3" ref="1">
    <original>A</original>
    <variation>T</variation>
    <location>
        <position position="35"/>
    </location>
</feature>
<gene>
    <name type="primary">cbf2</name>
    <name type="synonym">peb4A</name>
    <name type="ordered locus">CJJ81176_0624</name>
</gene>
<dbReference type="EC" id="5.2.1.8"/>
<dbReference type="EMBL" id="X84703">
    <property type="protein sequence ID" value="CAA59175.1"/>
    <property type="molecule type" value="Genomic_DNA"/>
</dbReference>
<dbReference type="EMBL" id="CP000538">
    <property type="protein sequence ID" value="EAQ73401.1"/>
    <property type="molecule type" value="Genomic_DNA"/>
</dbReference>
<dbReference type="PIR" id="S52412">
    <property type="entry name" value="S52412"/>
</dbReference>
<dbReference type="SMR" id="A1VYV6"/>
<dbReference type="KEGG" id="cjj:CJJ81176_0624"/>
<dbReference type="eggNOG" id="COG0760">
    <property type="taxonomic scope" value="Bacteria"/>
</dbReference>
<dbReference type="HOGENOM" id="CLU_034646_1_1_7"/>
<dbReference type="Proteomes" id="UP000000646">
    <property type="component" value="Chromosome"/>
</dbReference>
<dbReference type="GO" id="GO:0003755">
    <property type="term" value="F:peptidyl-prolyl cis-trans isomerase activity"/>
    <property type="evidence" value="ECO:0007669"/>
    <property type="project" value="UniProtKB-KW"/>
</dbReference>
<dbReference type="Gene3D" id="1.10.8.1040">
    <property type="match status" value="1"/>
</dbReference>
<dbReference type="Gene3D" id="3.10.50.40">
    <property type="match status" value="1"/>
</dbReference>
<dbReference type="Gene3D" id="6.10.140.970">
    <property type="match status" value="1"/>
</dbReference>
<dbReference type="InterPro" id="IPR046357">
    <property type="entry name" value="PPIase_dom_sf"/>
</dbReference>
<dbReference type="InterPro" id="IPR000297">
    <property type="entry name" value="PPIase_PpiC"/>
</dbReference>
<dbReference type="InterPro" id="IPR023058">
    <property type="entry name" value="PPIase_PpiC_CS"/>
</dbReference>
<dbReference type="InterPro" id="IPR050245">
    <property type="entry name" value="PrsA_foldase"/>
</dbReference>
<dbReference type="PANTHER" id="PTHR47245:SF2">
    <property type="entry name" value="PEPTIDYL-PROLYL CIS-TRANS ISOMERASE HP_0175-RELATED"/>
    <property type="match status" value="1"/>
</dbReference>
<dbReference type="PANTHER" id="PTHR47245">
    <property type="entry name" value="PEPTIDYLPROLYL ISOMERASE"/>
    <property type="match status" value="1"/>
</dbReference>
<dbReference type="Pfam" id="PF13616">
    <property type="entry name" value="Rotamase_3"/>
    <property type="match status" value="1"/>
</dbReference>
<dbReference type="SUPFAM" id="SSF54534">
    <property type="entry name" value="FKBP-like"/>
    <property type="match status" value="1"/>
</dbReference>
<dbReference type="PROSITE" id="PS01096">
    <property type="entry name" value="PPIC_PPIASE_1"/>
    <property type="match status" value="1"/>
</dbReference>
<dbReference type="PROSITE" id="PS50198">
    <property type="entry name" value="PPIC_PPIASE_2"/>
    <property type="match status" value="1"/>
</dbReference>
<proteinExistence type="inferred from homology"/>
<accession>A1VYV6</accession>
<accession>Q46105</accession>
<organism>
    <name type="scientific">Campylobacter jejuni subsp. jejuni serotype O:23/36 (strain 81-176)</name>
    <dbReference type="NCBI Taxonomy" id="354242"/>
    <lineage>
        <taxon>Bacteria</taxon>
        <taxon>Pseudomonadati</taxon>
        <taxon>Campylobacterota</taxon>
        <taxon>Epsilonproteobacteria</taxon>
        <taxon>Campylobacterales</taxon>
        <taxon>Campylobacteraceae</taxon>
        <taxon>Campylobacter</taxon>
    </lineage>
</organism>
<evidence type="ECO:0000255" key="1"/>
<evidence type="ECO:0000255" key="2">
    <source>
        <dbReference type="PROSITE-ProRule" id="PRU00278"/>
    </source>
</evidence>
<evidence type="ECO:0000305" key="3"/>
<comment type="catalytic activity">
    <reaction>
        <text>[protein]-peptidylproline (omega=180) = [protein]-peptidylproline (omega=0)</text>
        <dbReference type="Rhea" id="RHEA:16237"/>
        <dbReference type="Rhea" id="RHEA-COMP:10747"/>
        <dbReference type="Rhea" id="RHEA-COMP:10748"/>
        <dbReference type="ChEBI" id="CHEBI:83833"/>
        <dbReference type="ChEBI" id="CHEBI:83834"/>
        <dbReference type="EC" id="5.2.1.8"/>
    </reaction>
</comment>
<keyword id="KW-0413">Isomerase</keyword>
<keyword id="KW-0697">Rotamase</keyword>
<keyword id="KW-0732">Signal</keyword>
<sequence>MKKFSLVAAALIAGVALNVNAATVATVNGKSISDAEVSEFFAPMLRGQDFKTLPDNQKKALIQQYIMQDLILQDAKKQNLEKDPLYTKELDRAKDAILVNVYQEKILNTIKIDAAKVKAFYDQNKDKYVKPARVQAKHILVATEKEAKDIINELKGLKGKELDAKFSELAKEKSIDPGSKNQGGELGWFDQSTMVKPFTDAAFALKNGTITTTPVKTNFGYHVILKENSQAKGQIKFDEVKQGIENGLKFEEFKKVINQKGQDLLNSAKVEYK</sequence>
<reference key="1">
    <citation type="journal article" date="1995" name="Res. Microbiol.">
        <title>Nucleotide sequence and characterization of peb4A encoding an antigenic protein in Campylobacter jejuni.</title>
        <authorList>
            <person name="Burucoa C."/>
            <person name="Fremaux C."/>
            <person name="Pei Z."/>
            <person name="Tummuru M."/>
            <person name="Blaser M.J."/>
            <person name="Cenatiempo Y."/>
            <person name="Fauchere J.L."/>
        </authorList>
    </citation>
    <scope>NUCLEOTIDE SEQUENCE [GENOMIC DNA]</scope>
</reference>
<reference key="2">
    <citation type="submission" date="2006-12" db="EMBL/GenBank/DDBJ databases">
        <authorList>
            <person name="Fouts D.E."/>
            <person name="Nelson K.E."/>
            <person name="Sebastian Y."/>
        </authorList>
    </citation>
    <scope>NUCLEOTIDE SEQUENCE [LARGE SCALE GENOMIC DNA]</scope>
    <source>
        <strain>81-176</strain>
    </source>
</reference>
<name>CBF2_CAMJJ</name>